<name>NRDI_SALDC</name>
<protein>
    <recommendedName>
        <fullName evidence="1">Protein NrdI</fullName>
    </recommendedName>
</protein>
<dbReference type="EMBL" id="CP001144">
    <property type="protein sequence ID" value="ACH75394.1"/>
    <property type="molecule type" value="Genomic_DNA"/>
</dbReference>
<dbReference type="RefSeq" id="WP_001275410.1">
    <property type="nucleotide sequence ID" value="NC_011205.1"/>
</dbReference>
<dbReference type="SMR" id="B5FSW2"/>
<dbReference type="KEGG" id="sed:SeD_A3112"/>
<dbReference type="HOGENOM" id="CLU_114845_0_0_6"/>
<dbReference type="Proteomes" id="UP000008322">
    <property type="component" value="Chromosome"/>
</dbReference>
<dbReference type="GO" id="GO:0010181">
    <property type="term" value="F:FMN binding"/>
    <property type="evidence" value="ECO:0007669"/>
    <property type="project" value="InterPro"/>
</dbReference>
<dbReference type="GO" id="GO:0036211">
    <property type="term" value="P:protein modification process"/>
    <property type="evidence" value="ECO:0007669"/>
    <property type="project" value="InterPro"/>
</dbReference>
<dbReference type="FunFam" id="3.40.50.360:FF:000005">
    <property type="entry name" value="Protein NrdI"/>
    <property type="match status" value="1"/>
</dbReference>
<dbReference type="Gene3D" id="3.40.50.360">
    <property type="match status" value="1"/>
</dbReference>
<dbReference type="HAMAP" id="MF_00128">
    <property type="entry name" value="NrdI"/>
    <property type="match status" value="1"/>
</dbReference>
<dbReference type="InterPro" id="IPR029039">
    <property type="entry name" value="Flavoprotein-like_sf"/>
</dbReference>
<dbReference type="InterPro" id="IPR020852">
    <property type="entry name" value="RNR_Ib_NrdI_bac"/>
</dbReference>
<dbReference type="InterPro" id="IPR004465">
    <property type="entry name" value="RNR_NrdI"/>
</dbReference>
<dbReference type="NCBIfam" id="TIGR00333">
    <property type="entry name" value="nrdI"/>
    <property type="match status" value="1"/>
</dbReference>
<dbReference type="PANTHER" id="PTHR37297">
    <property type="entry name" value="PROTEIN NRDI"/>
    <property type="match status" value="1"/>
</dbReference>
<dbReference type="PANTHER" id="PTHR37297:SF1">
    <property type="entry name" value="PROTEIN NRDI"/>
    <property type="match status" value="1"/>
</dbReference>
<dbReference type="Pfam" id="PF07972">
    <property type="entry name" value="Flavodoxin_NdrI"/>
    <property type="match status" value="1"/>
</dbReference>
<dbReference type="PIRSF" id="PIRSF005087">
    <property type="entry name" value="NrdI"/>
    <property type="match status" value="1"/>
</dbReference>
<dbReference type="SUPFAM" id="SSF52218">
    <property type="entry name" value="Flavoproteins"/>
    <property type="match status" value="1"/>
</dbReference>
<comment type="function">
    <text evidence="1">Probably involved in ribonucleotide reductase function.</text>
</comment>
<comment type="similarity">
    <text evidence="1">Belongs to the NrdI family.</text>
</comment>
<accession>B5FSW2</accession>
<evidence type="ECO:0000255" key="1">
    <source>
        <dbReference type="HAMAP-Rule" id="MF_00128"/>
    </source>
</evidence>
<reference key="1">
    <citation type="journal article" date="2011" name="J. Bacteriol.">
        <title>Comparative genomics of 28 Salmonella enterica isolates: evidence for CRISPR-mediated adaptive sublineage evolution.</title>
        <authorList>
            <person name="Fricke W.F."/>
            <person name="Mammel M.K."/>
            <person name="McDermott P.F."/>
            <person name="Tartera C."/>
            <person name="White D.G."/>
            <person name="Leclerc J.E."/>
            <person name="Ravel J."/>
            <person name="Cebula T.A."/>
        </authorList>
    </citation>
    <scope>NUCLEOTIDE SEQUENCE [LARGE SCALE GENOMIC DNA]</scope>
    <source>
        <strain>CT_02021853</strain>
    </source>
</reference>
<gene>
    <name evidence="1" type="primary">nrdI</name>
    <name type="ordered locus">SeD_A3112</name>
</gene>
<organism>
    <name type="scientific">Salmonella dublin (strain CT_02021853)</name>
    <dbReference type="NCBI Taxonomy" id="439851"/>
    <lineage>
        <taxon>Bacteria</taxon>
        <taxon>Pseudomonadati</taxon>
        <taxon>Pseudomonadota</taxon>
        <taxon>Gammaproteobacteria</taxon>
        <taxon>Enterobacterales</taxon>
        <taxon>Enterobacteriaceae</taxon>
        <taxon>Salmonella</taxon>
    </lineage>
</organism>
<proteinExistence type="inferred from homology"/>
<sequence>MSALVYFSSSSENTHRFMQRLGLPATRIPLNERERIRVDEPYILVVPSYGGGGMAGAVPRQVIRFLNDEHNRARIRGVIASGNRNFGDAWGCAGDVIAQKCGVPWLYRFELMGTQRDIDNVRKGVNEFWQQLSRSA</sequence>
<feature type="chain" id="PRO_1000095628" description="Protein NrdI">
    <location>
        <begin position="1"/>
        <end position="136"/>
    </location>
</feature>